<proteinExistence type="evidence at protein level"/>
<reference key="1">
    <citation type="journal article" date="2001" name="Nature">
        <title>Genome sequence and gene compaction of the eukaryote parasite Encephalitozoon cuniculi.</title>
        <authorList>
            <person name="Katinka M.D."/>
            <person name="Duprat S."/>
            <person name="Cornillot E."/>
            <person name="Metenier G."/>
            <person name="Thomarat F."/>
            <person name="Prensier G."/>
            <person name="Barbe V."/>
            <person name="Peyretaillade E."/>
            <person name="Brottier P."/>
            <person name="Wincker P."/>
            <person name="Delbac F."/>
            <person name="El Alaoui H."/>
            <person name="Peyret P."/>
            <person name="Saurin W."/>
            <person name="Gouy M."/>
            <person name="Weissenbach J."/>
            <person name="Vivares C.P."/>
        </authorList>
    </citation>
    <scope>NUCLEOTIDE SEQUENCE [LARGE SCALE GENOMIC DNA]</scope>
    <source>
        <strain>GB-M1</strain>
    </source>
</reference>
<reference key="2">
    <citation type="journal article" date="2006" name="Proteomics">
        <title>Proteomic analysis of the eukaryotic parasite Encephalitozoon cuniculi (microsporidia): a reference map for proteins expressed in late sporogonial stages.</title>
        <authorList>
            <person name="Brosson D."/>
            <person name="Kuhn L."/>
            <person name="Delbac F."/>
            <person name="Garin J."/>
            <person name="Vivares C.P."/>
            <person name="Texier C."/>
        </authorList>
    </citation>
    <scope>IDENTIFICATION BY MASS SPECTROMETRY [LARGE SCALE ANALYSIS]</scope>
    <scope>DEVELOPMENTAL STAGE</scope>
</reference>
<gene>
    <name type="primary">RVB2</name>
    <name type="ordered locus">ECU11_1270</name>
</gene>
<evidence type="ECO:0000250" key="1"/>
<evidence type="ECO:0000269" key="2">
    <source>
    </source>
</evidence>
<evidence type="ECO:0000305" key="3"/>
<sequence length="418" mass="46375">MEIRDVETVNRINLHSHIAGLGCDGDEVEYDKDGLVGQIKARKAMAVIRKMVESNKGGKVVLIKGDRGSGKTALAIGLSKSLGGVHFNSISGTEIYSLEMSKSEAITQALRKSVGLRIKESVKVIEGEVVSLSGRRIVLKTVDMESSFEIGEKMRGELDKEKVSAGDVIRIVRERGRVYKIGTSMVKRSDVVGTDTRFVPCPEGELIRITEETQEISLHDIDVVNSKAEGYLALFSGETGEIRAETRDEVNKKVWGWINEGKAEIVRGVLFIDEVHMLDIESFAFLNKAVEEDFCPVILVSTNKGECIVRGTDEPSPYGIPRDFIDRALIISMEKHCRRDLEAILRHRILEEDILIDDDAVDRLVSISEASGLRYSMNLLTISSMRASRRNGRVALGDVERAFELFLDEARGTESFNG</sequence>
<comment type="function">
    <text evidence="1">DNA helicase which participates in several chromatin remodeling complexes, including the SWR1 and the INO80 complexes. The SWR1 complex mediates the ATP-dependent exchange of histone H2A for the H2A variant HZT1 leading to transcriptional regulation of selected genes by chromatin remodeling. The INO80 complex remodels chromatin by shifting nucleosomes and is involved in DNA repair. Also involved in pre-rRNA processing (By similarity).</text>
</comment>
<comment type="catalytic activity">
    <reaction>
        <text>ATP + H2O = ADP + phosphate + H(+)</text>
        <dbReference type="Rhea" id="RHEA:13065"/>
        <dbReference type="ChEBI" id="CHEBI:15377"/>
        <dbReference type="ChEBI" id="CHEBI:15378"/>
        <dbReference type="ChEBI" id="CHEBI:30616"/>
        <dbReference type="ChEBI" id="CHEBI:43474"/>
        <dbReference type="ChEBI" id="CHEBI:456216"/>
        <dbReference type="EC" id="3.6.4.12"/>
    </reaction>
</comment>
<comment type="subunit">
    <text evidence="1">Component of the SWR1 chromatin remodeling complex, the INO80 chromatin remodeling complex, and of the R2TP complex.</text>
</comment>
<comment type="subcellular location">
    <subcellularLocation>
        <location evidence="1">Nucleus</location>
    </subcellularLocation>
</comment>
<comment type="developmental stage">
    <text evidence="2">Expressed in late sporogonial stages.</text>
</comment>
<comment type="similarity">
    <text evidence="3">Belongs to the RuvB family.</text>
</comment>
<keyword id="KW-0010">Activator</keyword>
<keyword id="KW-0067">ATP-binding</keyword>
<keyword id="KW-0156">Chromatin regulator</keyword>
<keyword id="KW-0227">DNA damage</keyword>
<keyword id="KW-0234">DNA repair</keyword>
<keyword id="KW-0347">Helicase</keyword>
<keyword id="KW-0378">Hydrolase</keyword>
<keyword id="KW-0547">Nucleotide-binding</keyword>
<keyword id="KW-0539">Nucleus</keyword>
<keyword id="KW-1185">Reference proteome</keyword>
<keyword id="KW-0698">rRNA processing</keyword>
<keyword id="KW-0804">Transcription</keyword>
<keyword id="KW-0805">Transcription regulation</keyword>
<protein>
    <recommendedName>
        <fullName>RuvB-like helicase 2</fullName>
        <ecNumber>3.6.4.12</ecNumber>
    </recommendedName>
</protein>
<dbReference type="EC" id="3.6.4.12"/>
<dbReference type="EMBL" id="AL590450">
    <property type="protein sequence ID" value="CAD26037.1"/>
    <property type="molecule type" value="Genomic_DNA"/>
</dbReference>
<dbReference type="RefSeq" id="NP_586433.1">
    <property type="nucleotide sequence ID" value="NM_001042266.1"/>
</dbReference>
<dbReference type="SMR" id="Q8SU27"/>
<dbReference type="FunCoup" id="Q8SU27">
    <property type="interactions" value="306"/>
</dbReference>
<dbReference type="STRING" id="284813.Q8SU27"/>
<dbReference type="GeneID" id="860087"/>
<dbReference type="KEGG" id="ecu:ECU11_1270"/>
<dbReference type="VEuPathDB" id="MicrosporidiaDB:ECU11_1270"/>
<dbReference type="HOGENOM" id="CLU_028311_4_1_1"/>
<dbReference type="InParanoid" id="Q8SU27"/>
<dbReference type="OMA" id="IINTEPY"/>
<dbReference type="OrthoDB" id="10060499at2759"/>
<dbReference type="Proteomes" id="UP000000819">
    <property type="component" value="Chromosome XI"/>
</dbReference>
<dbReference type="GO" id="GO:0005634">
    <property type="term" value="C:nucleus"/>
    <property type="evidence" value="ECO:0007669"/>
    <property type="project" value="UniProtKB-SubCell"/>
</dbReference>
<dbReference type="GO" id="GO:0005524">
    <property type="term" value="F:ATP binding"/>
    <property type="evidence" value="ECO:0007669"/>
    <property type="project" value="UniProtKB-KW"/>
</dbReference>
<dbReference type="GO" id="GO:0016887">
    <property type="term" value="F:ATP hydrolysis activity"/>
    <property type="evidence" value="ECO:0007669"/>
    <property type="project" value="InterPro"/>
</dbReference>
<dbReference type="GO" id="GO:0008094">
    <property type="term" value="F:ATP-dependent activity, acting on DNA"/>
    <property type="evidence" value="ECO:0007669"/>
    <property type="project" value="InterPro"/>
</dbReference>
<dbReference type="GO" id="GO:0004386">
    <property type="term" value="F:helicase activity"/>
    <property type="evidence" value="ECO:0007669"/>
    <property type="project" value="UniProtKB-KW"/>
</dbReference>
<dbReference type="GO" id="GO:0006325">
    <property type="term" value="P:chromatin organization"/>
    <property type="evidence" value="ECO:0007669"/>
    <property type="project" value="UniProtKB-KW"/>
</dbReference>
<dbReference type="GO" id="GO:0006281">
    <property type="term" value="P:DNA repair"/>
    <property type="evidence" value="ECO:0007669"/>
    <property type="project" value="UniProtKB-KW"/>
</dbReference>
<dbReference type="GO" id="GO:0006364">
    <property type="term" value="P:rRNA processing"/>
    <property type="evidence" value="ECO:0007669"/>
    <property type="project" value="UniProtKB-KW"/>
</dbReference>
<dbReference type="Gene3D" id="1.10.8.60">
    <property type="match status" value="1"/>
</dbReference>
<dbReference type="Gene3D" id="3.40.50.300">
    <property type="entry name" value="P-loop containing nucleotide triphosphate hydrolases"/>
    <property type="match status" value="1"/>
</dbReference>
<dbReference type="Gene3D" id="2.40.50.360">
    <property type="entry name" value="RuvB-like helicase, domain II"/>
    <property type="match status" value="1"/>
</dbReference>
<dbReference type="InterPro" id="IPR003593">
    <property type="entry name" value="AAA+_ATPase"/>
</dbReference>
<dbReference type="InterPro" id="IPR012340">
    <property type="entry name" value="NA-bd_OB-fold"/>
</dbReference>
<dbReference type="InterPro" id="IPR027417">
    <property type="entry name" value="P-loop_NTPase"/>
</dbReference>
<dbReference type="InterPro" id="IPR027238">
    <property type="entry name" value="RuvB-like"/>
</dbReference>
<dbReference type="InterPro" id="IPR041048">
    <property type="entry name" value="RuvB-like_C"/>
</dbReference>
<dbReference type="InterPro" id="IPR042487">
    <property type="entry name" value="RuvBL1/2_DNA/RNA_bd_dom"/>
</dbReference>
<dbReference type="InterPro" id="IPR010339">
    <property type="entry name" value="TIP49_P-loop"/>
</dbReference>
<dbReference type="PANTHER" id="PTHR11093">
    <property type="entry name" value="RUVB-RELATED REPTIN AND PONTIN"/>
    <property type="match status" value="1"/>
</dbReference>
<dbReference type="Pfam" id="PF06068">
    <property type="entry name" value="TIP49"/>
    <property type="match status" value="1"/>
</dbReference>
<dbReference type="Pfam" id="PF17856">
    <property type="entry name" value="TIP49_C"/>
    <property type="match status" value="1"/>
</dbReference>
<dbReference type="SMART" id="SM00382">
    <property type="entry name" value="AAA"/>
    <property type="match status" value="1"/>
</dbReference>
<dbReference type="SUPFAM" id="SSF50249">
    <property type="entry name" value="Nucleic acid-binding proteins"/>
    <property type="match status" value="1"/>
</dbReference>
<dbReference type="SUPFAM" id="SSF52540">
    <property type="entry name" value="P-loop containing nucleoside triphosphate hydrolases"/>
    <property type="match status" value="1"/>
</dbReference>
<feature type="chain" id="PRO_0000382920" description="RuvB-like helicase 2">
    <location>
        <begin position="1"/>
        <end position="418"/>
    </location>
</feature>
<feature type="binding site" evidence="1">
    <location>
        <begin position="65"/>
        <end position="72"/>
    </location>
    <ligand>
        <name>ATP</name>
        <dbReference type="ChEBI" id="CHEBI:30616"/>
    </ligand>
</feature>
<organism>
    <name type="scientific">Encephalitozoon cuniculi (strain GB-M1)</name>
    <name type="common">Microsporidian parasite</name>
    <dbReference type="NCBI Taxonomy" id="284813"/>
    <lineage>
        <taxon>Eukaryota</taxon>
        <taxon>Fungi</taxon>
        <taxon>Fungi incertae sedis</taxon>
        <taxon>Microsporidia</taxon>
        <taxon>Unikaryonidae</taxon>
        <taxon>Encephalitozoon</taxon>
    </lineage>
</organism>
<name>RUVB2_ENCCU</name>
<accession>Q8SU27</accession>